<reference key="1">
    <citation type="journal article" date="2006" name="Appl. Environ. Microbiol.">
        <title>Genome sequence of the chemolithoautotrophic nitrite-oxidizing bacterium Nitrobacter winogradskyi Nb-255.</title>
        <authorList>
            <person name="Starkenburg S.R."/>
            <person name="Chain P.S.G."/>
            <person name="Sayavedra-Soto L.A."/>
            <person name="Hauser L."/>
            <person name="Land M.L."/>
            <person name="Larimer F.W."/>
            <person name="Malfatti S.A."/>
            <person name="Klotz M.G."/>
            <person name="Bottomley P.J."/>
            <person name="Arp D.J."/>
            <person name="Hickey W.J."/>
        </authorList>
    </citation>
    <scope>NUCLEOTIDE SEQUENCE [LARGE SCALE GENOMIC DNA]</scope>
    <source>
        <strain>ATCC 25391 / DSM 10237 / CIP 104748 / NCIMB 11846 / Nb-255</strain>
    </source>
</reference>
<keyword id="KW-0975">Bacterial flagellum</keyword>
<keyword id="KW-0574">Periplasm</keyword>
<keyword id="KW-1185">Reference proteome</keyword>
<keyword id="KW-0732">Signal</keyword>
<organism>
    <name type="scientific">Nitrobacter winogradskyi (strain ATCC 25391 / DSM 10237 / CIP 104748 / NCIMB 11846 / Nb-255)</name>
    <dbReference type="NCBI Taxonomy" id="323098"/>
    <lineage>
        <taxon>Bacteria</taxon>
        <taxon>Pseudomonadati</taxon>
        <taxon>Pseudomonadota</taxon>
        <taxon>Alphaproteobacteria</taxon>
        <taxon>Hyphomicrobiales</taxon>
        <taxon>Nitrobacteraceae</taxon>
        <taxon>Nitrobacter</taxon>
    </lineage>
</organism>
<feature type="signal peptide" evidence="1">
    <location>
        <begin position="1"/>
        <end position="29"/>
    </location>
</feature>
<feature type="chain" id="PRO_0000236305" description="Flagellar P-ring protein">
    <location>
        <begin position="30"/>
        <end position="374"/>
    </location>
</feature>
<feature type="region of interest" description="Disordered" evidence="2">
    <location>
        <begin position="296"/>
        <end position="316"/>
    </location>
</feature>
<feature type="compositionally biased region" description="Polar residues" evidence="2">
    <location>
        <begin position="296"/>
        <end position="311"/>
    </location>
</feature>
<dbReference type="EMBL" id="CP000115">
    <property type="protein sequence ID" value="ABA04373.1"/>
    <property type="molecule type" value="Genomic_DNA"/>
</dbReference>
<dbReference type="RefSeq" id="WP_011314404.1">
    <property type="nucleotide sequence ID" value="NC_007406.1"/>
</dbReference>
<dbReference type="SMR" id="Q3STL8"/>
<dbReference type="STRING" id="323098.Nwi_1111"/>
<dbReference type="KEGG" id="nwi:Nwi_1111"/>
<dbReference type="eggNOG" id="COG1706">
    <property type="taxonomic scope" value="Bacteria"/>
</dbReference>
<dbReference type="HOGENOM" id="CLU_045235_1_0_5"/>
<dbReference type="OrthoDB" id="9786431at2"/>
<dbReference type="Proteomes" id="UP000002531">
    <property type="component" value="Chromosome"/>
</dbReference>
<dbReference type="GO" id="GO:0009428">
    <property type="term" value="C:bacterial-type flagellum basal body, distal rod, P ring"/>
    <property type="evidence" value="ECO:0007669"/>
    <property type="project" value="InterPro"/>
</dbReference>
<dbReference type="GO" id="GO:0030288">
    <property type="term" value="C:outer membrane-bounded periplasmic space"/>
    <property type="evidence" value="ECO:0007669"/>
    <property type="project" value="InterPro"/>
</dbReference>
<dbReference type="GO" id="GO:0005198">
    <property type="term" value="F:structural molecule activity"/>
    <property type="evidence" value="ECO:0007669"/>
    <property type="project" value="InterPro"/>
</dbReference>
<dbReference type="GO" id="GO:0071973">
    <property type="term" value="P:bacterial-type flagellum-dependent cell motility"/>
    <property type="evidence" value="ECO:0007669"/>
    <property type="project" value="InterPro"/>
</dbReference>
<dbReference type="HAMAP" id="MF_00416">
    <property type="entry name" value="FlgI"/>
    <property type="match status" value="1"/>
</dbReference>
<dbReference type="InterPro" id="IPR001782">
    <property type="entry name" value="Flag_FlgI"/>
</dbReference>
<dbReference type="NCBIfam" id="NF003676">
    <property type="entry name" value="PRK05303.1"/>
    <property type="match status" value="1"/>
</dbReference>
<dbReference type="PANTHER" id="PTHR30381">
    <property type="entry name" value="FLAGELLAR P-RING PERIPLASMIC PROTEIN FLGI"/>
    <property type="match status" value="1"/>
</dbReference>
<dbReference type="PANTHER" id="PTHR30381:SF0">
    <property type="entry name" value="FLAGELLAR P-RING PROTEIN"/>
    <property type="match status" value="1"/>
</dbReference>
<dbReference type="Pfam" id="PF02119">
    <property type="entry name" value="FlgI"/>
    <property type="match status" value="1"/>
</dbReference>
<dbReference type="PRINTS" id="PR01010">
    <property type="entry name" value="FLGPRINGFLGI"/>
</dbReference>
<accession>Q3STL8</accession>
<name>FLGI_NITWN</name>
<sequence length="374" mass="38693">MSGLGFTGVVRIAVMALLALAFLGAPAHATSRIKDLANIEGVRQNQLIGYGLVVGLNGTGDTLNNIPFTKQSLQAMLERMGVNIRGATIRTGNVAAVMVTGNLPAFATQGTRMDVTVSAMGDARSLQGGTLLVTPLLGADGNVYAVAQGSLAIGGFSAEGAAASVTKGVPTNGRIANGAIVEREIEFALNRMPNVRLALRNGDFTTAKRIAAAVNDFLGTKTAEPIDPSTVQLSIPAEFRGNVVALLTEIEQLQVEPDITAKIIIDERSGIIVMGRDVRVATVAVAQGNLTVSISESPQVSQPNPLSNGRTVMTPRTDVGVTENGNKLALVKNGVSLQELVDGLNGLGIGPRDLIGILQAIKAAGAIEADIEVM</sequence>
<proteinExistence type="inferred from homology"/>
<comment type="function">
    <text evidence="1">Assembles around the rod to form the L-ring and probably protects the motor/basal body from shearing forces during rotation.</text>
</comment>
<comment type="subunit">
    <text evidence="1">The basal body constitutes a major portion of the flagellar organelle and consists of four rings (L,P,S, and M) mounted on a central rod.</text>
</comment>
<comment type="subcellular location">
    <subcellularLocation>
        <location evidence="1">Periplasm</location>
    </subcellularLocation>
    <subcellularLocation>
        <location evidence="1">Bacterial flagellum basal body</location>
    </subcellularLocation>
</comment>
<comment type="similarity">
    <text evidence="1">Belongs to the FlgI family.</text>
</comment>
<evidence type="ECO:0000255" key="1">
    <source>
        <dbReference type="HAMAP-Rule" id="MF_00416"/>
    </source>
</evidence>
<evidence type="ECO:0000256" key="2">
    <source>
        <dbReference type="SAM" id="MobiDB-lite"/>
    </source>
</evidence>
<gene>
    <name evidence="1" type="primary">flgI</name>
    <name type="ordered locus">Nwi_1111</name>
</gene>
<protein>
    <recommendedName>
        <fullName evidence="1">Flagellar P-ring protein</fullName>
    </recommendedName>
    <alternativeName>
        <fullName evidence="1">Basal body P-ring protein</fullName>
    </alternativeName>
</protein>